<comment type="function">
    <text evidence="1">The glycine cleavage system catalyzes the degradation of glycine.</text>
</comment>
<comment type="catalytic activity">
    <reaction evidence="1">
        <text>N(6)-[(R)-S(8)-aminomethyldihydrolipoyl]-L-lysyl-[protein] + (6S)-5,6,7,8-tetrahydrofolate = N(6)-[(R)-dihydrolipoyl]-L-lysyl-[protein] + (6R)-5,10-methylene-5,6,7,8-tetrahydrofolate + NH4(+)</text>
        <dbReference type="Rhea" id="RHEA:16945"/>
        <dbReference type="Rhea" id="RHEA-COMP:10475"/>
        <dbReference type="Rhea" id="RHEA-COMP:10492"/>
        <dbReference type="ChEBI" id="CHEBI:15636"/>
        <dbReference type="ChEBI" id="CHEBI:28938"/>
        <dbReference type="ChEBI" id="CHEBI:57453"/>
        <dbReference type="ChEBI" id="CHEBI:83100"/>
        <dbReference type="ChEBI" id="CHEBI:83143"/>
        <dbReference type="EC" id="2.1.2.10"/>
    </reaction>
</comment>
<comment type="subunit">
    <text evidence="1">The glycine cleavage system is composed of four proteins: P, T, L and H.</text>
</comment>
<comment type="similarity">
    <text evidence="1">Belongs to the GcvT family.</text>
</comment>
<reference key="1">
    <citation type="journal article" date="2008" name="DNA Res.">
        <title>Complete genome sequence and comparative analysis of the wild-type commensal Escherichia coli strain SE11 isolated from a healthy adult.</title>
        <authorList>
            <person name="Oshima K."/>
            <person name="Toh H."/>
            <person name="Ogura Y."/>
            <person name="Sasamoto H."/>
            <person name="Morita H."/>
            <person name="Park S.-H."/>
            <person name="Ooka T."/>
            <person name="Iyoda S."/>
            <person name="Taylor T.D."/>
            <person name="Hayashi T."/>
            <person name="Itoh K."/>
            <person name="Hattori M."/>
        </authorList>
    </citation>
    <scope>NUCLEOTIDE SEQUENCE [LARGE SCALE GENOMIC DNA]</scope>
    <source>
        <strain>SE11</strain>
    </source>
</reference>
<name>GCST_ECOSE</name>
<feature type="chain" id="PRO_1000114093" description="Aminomethyltransferase">
    <location>
        <begin position="1"/>
        <end position="364"/>
    </location>
</feature>
<protein>
    <recommendedName>
        <fullName evidence="1">Aminomethyltransferase</fullName>
        <ecNumber evidence="1">2.1.2.10</ecNumber>
    </recommendedName>
    <alternativeName>
        <fullName evidence="1">Glycine cleavage system T protein</fullName>
    </alternativeName>
</protein>
<sequence>MAQQTPLYEQHTLCGARMVDFHGWMMPLHYGSQIDEHHAVRTDAGMFDVSHMTIVDLRGSRTREFLRYLLANDVAKLTKSGKALYSGMLNASGGVIDDLIVYYFTEDFFRLVVNSATREKDLSWITQHAEPFGIEITVRDDLSMIAVQGPNAQAKAATLFNDAQRQAVEGMKPFFGVQAGDLFIATTGYTGEAGYEIALPNEKAADFWRALVEAGVKPCGLGARDTLRLEAGMNLYGQEMDETISPLAANMGWTIAWEPADRDFIGREALEVQREHGTEKLVGLVMTEKGVLRNELPVRFTDAQGNQHEGIITSGTFSPTLGYSIALARVPEGIGETAIVQIRNREMPVKVTKPVFVRNGKAVA</sequence>
<proteinExistence type="inferred from homology"/>
<organism>
    <name type="scientific">Escherichia coli (strain SE11)</name>
    <dbReference type="NCBI Taxonomy" id="409438"/>
    <lineage>
        <taxon>Bacteria</taxon>
        <taxon>Pseudomonadati</taxon>
        <taxon>Pseudomonadota</taxon>
        <taxon>Gammaproteobacteria</taxon>
        <taxon>Enterobacterales</taxon>
        <taxon>Enterobacteriaceae</taxon>
        <taxon>Escherichia</taxon>
    </lineage>
</organism>
<accession>B6I738</accession>
<gene>
    <name evidence="1" type="primary">gcvT</name>
    <name type="ordered locus">ECSE_3168</name>
</gene>
<keyword id="KW-0032">Aminotransferase</keyword>
<keyword id="KW-0808">Transferase</keyword>
<dbReference type="EC" id="2.1.2.10" evidence="1"/>
<dbReference type="EMBL" id="AP009240">
    <property type="protein sequence ID" value="BAG78692.1"/>
    <property type="molecule type" value="Genomic_DNA"/>
</dbReference>
<dbReference type="RefSeq" id="WP_000068701.1">
    <property type="nucleotide sequence ID" value="NC_011415.1"/>
</dbReference>
<dbReference type="SMR" id="B6I738"/>
<dbReference type="GeneID" id="75205258"/>
<dbReference type="KEGG" id="ecy:ECSE_3168"/>
<dbReference type="HOGENOM" id="CLU_007884_10_2_6"/>
<dbReference type="Proteomes" id="UP000008199">
    <property type="component" value="Chromosome"/>
</dbReference>
<dbReference type="GO" id="GO:0005829">
    <property type="term" value="C:cytosol"/>
    <property type="evidence" value="ECO:0007669"/>
    <property type="project" value="TreeGrafter"/>
</dbReference>
<dbReference type="GO" id="GO:0005960">
    <property type="term" value="C:glycine cleavage complex"/>
    <property type="evidence" value="ECO:0007669"/>
    <property type="project" value="InterPro"/>
</dbReference>
<dbReference type="GO" id="GO:0004047">
    <property type="term" value="F:aminomethyltransferase activity"/>
    <property type="evidence" value="ECO:0007669"/>
    <property type="project" value="UniProtKB-UniRule"/>
</dbReference>
<dbReference type="GO" id="GO:0008483">
    <property type="term" value="F:transaminase activity"/>
    <property type="evidence" value="ECO:0007669"/>
    <property type="project" value="UniProtKB-KW"/>
</dbReference>
<dbReference type="GO" id="GO:0019464">
    <property type="term" value="P:glycine decarboxylation via glycine cleavage system"/>
    <property type="evidence" value="ECO:0007669"/>
    <property type="project" value="UniProtKB-UniRule"/>
</dbReference>
<dbReference type="FunFam" id="2.40.30.110:FF:000001">
    <property type="entry name" value="Aminomethyltransferase"/>
    <property type="match status" value="1"/>
</dbReference>
<dbReference type="FunFam" id="3.30.70.1400:FF:000001">
    <property type="entry name" value="Aminomethyltransferase"/>
    <property type="match status" value="1"/>
</dbReference>
<dbReference type="FunFam" id="4.10.1250.10:FF:000001">
    <property type="entry name" value="Aminomethyltransferase"/>
    <property type="match status" value="1"/>
</dbReference>
<dbReference type="Gene3D" id="2.40.30.110">
    <property type="entry name" value="Aminomethyltransferase beta-barrel domains"/>
    <property type="match status" value="1"/>
</dbReference>
<dbReference type="Gene3D" id="3.30.70.1400">
    <property type="entry name" value="Aminomethyltransferase beta-barrel domains"/>
    <property type="match status" value="1"/>
</dbReference>
<dbReference type="Gene3D" id="4.10.1250.10">
    <property type="entry name" value="Aminomethyltransferase fragment"/>
    <property type="match status" value="1"/>
</dbReference>
<dbReference type="Gene3D" id="3.30.1360.120">
    <property type="entry name" value="Probable tRNA modification gtpase trme, domain 1"/>
    <property type="match status" value="1"/>
</dbReference>
<dbReference type="HAMAP" id="MF_00259">
    <property type="entry name" value="GcvT"/>
    <property type="match status" value="1"/>
</dbReference>
<dbReference type="InterPro" id="IPR006223">
    <property type="entry name" value="GCS_T"/>
</dbReference>
<dbReference type="InterPro" id="IPR022903">
    <property type="entry name" value="GCS_T_bac"/>
</dbReference>
<dbReference type="InterPro" id="IPR013977">
    <property type="entry name" value="GCST_C"/>
</dbReference>
<dbReference type="InterPro" id="IPR006222">
    <property type="entry name" value="GCV_T_N"/>
</dbReference>
<dbReference type="InterPro" id="IPR028896">
    <property type="entry name" value="GcvT/YgfZ/DmdA"/>
</dbReference>
<dbReference type="InterPro" id="IPR029043">
    <property type="entry name" value="GcvT/YgfZ_C"/>
</dbReference>
<dbReference type="InterPro" id="IPR027266">
    <property type="entry name" value="TrmE/GcvT_dom1"/>
</dbReference>
<dbReference type="NCBIfam" id="TIGR00528">
    <property type="entry name" value="gcvT"/>
    <property type="match status" value="1"/>
</dbReference>
<dbReference type="NCBIfam" id="NF001567">
    <property type="entry name" value="PRK00389.1"/>
    <property type="match status" value="1"/>
</dbReference>
<dbReference type="PANTHER" id="PTHR43757">
    <property type="entry name" value="AMINOMETHYLTRANSFERASE"/>
    <property type="match status" value="1"/>
</dbReference>
<dbReference type="PANTHER" id="PTHR43757:SF2">
    <property type="entry name" value="AMINOMETHYLTRANSFERASE, MITOCHONDRIAL"/>
    <property type="match status" value="1"/>
</dbReference>
<dbReference type="Pfam" id="PF01571">
    <property type="entry name" value="GCV_T"/>
    <property type="match status" value="1"/>
</dbReference>
<dbReference type="Pfam" id="PF08669">
    <property type="entry name" value="GCV_T_C"/>
    <property type="match status" value="1"/>
</dbReference>
<dbReference type="PIRSF" id="PIRSF006487">
    <property type="entry name" value="GcvT"/>
    <property type="match status" value="1"/>
</dbReference>
<dbReference type="SUPFAM" id="SSF101790">
    <property type="entry name" value="Aminomethyltransferase beta-barrel domain"/>
    <property type="match status" value="1"/>
</dbReference>
<dbReference type="SUPFAM" id="SSF103025">
    <property type="entry name" value="Folate-binding domain"/>
    <property type="match status" value="1"/>
</dbReference>
<evidence type="ECO:0000255" key="1">
    <source>
        <dbReference type="HAMAP-Rule" id="MF_00259"/>
    </source>
</evidence>